<dbReference type="EC" id="7.6.2.-" evidence="1"/>
<dbReference type="EMBL" id="AE005673">
    <property type="protein sequence ID" value="AAK22916.1"/>
    <property type="molecule type" value="Genomic_DNA"/>
</dbReference>
<dbReference type="PIR" id="H87364">
    <property type="entry name" value="H87364"/>
</dbReference>
<dbReference type="RefSeq" id="NP_419748.1">
    <property type="nucleotide sequence ID" value="NC_002696.2"/>
</dbReference>
<dbReference type="RefSeq" id="WP_010918816.1">
    <property type="nucleotide sequence ID" value="NC_002696.2"/>
</dbReference>
<dbReference type="SMR" id="Q9A9P4"/>
<dbReference type="STRING" id="190650.CC_0932"/>
<dbReference type="EnsemblBacteria" id="AAK22916">
    <property type="protein sequence ID" value="AAK22916"/>
    <property type="gene ID" value="CC_0932"/>
</dbReference>
<dbReference type="KEGG" id="ccr:CC_0932"/>
<dbReference type="PATRIC" id="fig|190650.5.peg.946"/>
<dbReference type="eggNOG" id="COG1136">
    <property type="taxonomic scope" value="Bacteria"/>
</dbReference>
<dbReference type="HOGENOM" id="CLU_000604_1_22_5"/>
<dbReference type="BioCyc" id="CAULO:CC0932-MONOMER"/>
<dbReference type="Proteomes" id="UP000001816">
    <property type="component" value="Chromosome"/>
</dbReference>
<dbReference type="GO" id="GO:0005886">
    <property type="term" value="C:plasma membrane"/>
    <property type="evidence" value="ECO:0007669"/>
    <property type="project" value="UniProtKB-SubCell"/>
</dbReference>
<dbReference type="GO" id="GO:0005524">
    <property type="term" value="F:ATP binding"/>
    <property type="evidence" value="ECO:0007669"/>
    <property type="project" value="UniProtKB-KW"/>
</dbReference>
<dbReference type="GO" id="GO:0016887">
    <property type="term" value="F:ATP hydrolysis activity"/>
    <property type="evidence" value="ECO:0007669"/>
    <property type="project" value="InterPro"/>
</dbReference>
<dbReference type="GO" id="GO:0022857">
    <property type="term" value="F:transmembrane transporter activity"/>
    <property type="evidence" value="ECO:0007669"/>
    <property type="project" value="TreeGrafter"/>
</dbReference>
<dbReference type="CDD" id="cd03255">
    <property type="entry name" value="ABC_MJ0796_LolCDE_FtsE"/>
    <property type="match status" value="1"/>
</dbReference>
<dbReference type="FunFam" id="3.40.50.300:FF:000032">
    <property type="entry name" value="Export ABC transporter ATP-binding protein"/>
    <property type="match status" value="1"/>
</dbReference>
<dbReference type="Gene3D" id="3.40.50.300">
    <property type="entry name" value="P-loop containing nucleotide triphosphate hydrolases"/>
    <property type="match status" value="1"/>
</dbReference>
<dbReference type="InterPro" id="IPR003593">
    <property type="entry name" value="AAA+_ATPase"/>
</dbReference>
<dbReference type="InterPro" id="IPR003439">
    <property type="entry name" value="ABC_transporter-like_ATP-bd"/>
</dbReference>
<dbReference type="InterPro" id="IPR017871">
    <property type="entry name" value="ABC_transporter-like_CS"/>
</dbReference>
<dbReference type="InterPro" id="IPR015854">
    <property type="entry name" value="ABC_transpr_LolD-like"/>
</dbReference>
<dbReference type="InterPro" id="IPR017911">
    <property type="entry name" value="MacB-like_ATP-bd"/>
</dbReference>
<dbReference type="InterPro" id="IPR027417">
    <property type="entry name" value="P-loop_NTPase"/>
</dbReference>
<dbReference type="PANTHER" id="PTHR24220">
    <property type="entry name" value="IMPORT ATP-BINDING PROTEIN"/>
    <property type="match status" value="1"/>
</dbReference>
<dbReference type="PANTHER" id="PTHR24220:SF689">
    <property type="entry name" value="LIPOPROTEIN-RELEASING SYSTEM ATP-BINDING PROTEIN LOLD"/>
    <property type="match status" value="1"/>
</dbReference>
<dbReference type="Pfam" id="PF00005">
    <property type="entry name" value="ABC_tran"/>
    <property type="match status" value="1"/>
</dbReference>
<dbReference type="SMART" id="SM00382">
    <property type="entry name" value="AAA"/>
    <property type="match status" value="1"/>
</dbReference>
<dbReference type="SUPFAM" id="SSF52540">
    <property type="entry name" value="P-loop containing nucleoside triphosphate hydrolases"/>
    <property type="match status" value="1"/>
</dbReference>
<dbReference type="PROSITE" id="PS00211">
    <property type="entry name" value="ABC_TRANSPORTER_1"/>
    <property type="match status" value="1"/>
</dbReference>
<dbReference type="PROSITE" id="PS50893">
    <property type="entry name" value="ABC_TRANSPORTER_2"/>
    <property type="match status" value="1"/>
</dbReference>
<dbReference type="PROSITE" id="PS51244">
    <property type="entry name" value="LOLD"/>
    <property type="match status" value="1"/>
</dbReference>
<organism>
    <name type="scientific">Caulobacter vibrioides (strain ATCC 19089 / CIP 103742 / CB 15)</name>
    <name type="common">Caulobacter crescentus</name>
    <dbReference type="NCBI Taxonomy" id="190650"/>
    <lineage>
        <taxon>Bacteria</taxon>
        <taxon>Pseudomonadati</taxon>
        <taxon>Pseudomonadota</taxon>
        <taxon>Alphaproteobacteria</taxon>
        <taxon>Caulobacterales</taxon>
        <taxon>Caulobacteraceae</taxon>
        <taxon>Caulobacter</taxon>
    </lineage>
</organism>
<accession>Q9A9P4</accession>
<name>LOLD1_CAUVC</name>
<sequence>MTNVIEARGIEKVFHNGDEETRVLKGIDLTLGQGELAAMVGASGSGKSTLLSIIGLLLRPTAGTLSISGERVDDLSERMRARFRNQRLGFVFQFHHLLPDFTAMENVAFPAAAPGGGISRAMRTRARDLLARVGLEDRIDFPAARLSGGQKQRVAIARALMNRPDLIIADEPTGNLDRESADRVLDLMREVNREEGATFLICTHDDGVAARCGRRLTLSDGRLTSNVRDPGGFS</sequence>
<feature type="chain" id="PRO_0000092428" description="Lipoprotein-releasing system ATP-binding protein LolD 1">
    <location>
        <begin position="1"/>
        <end position="234"/>
    </location>
</feature>
<feature type="domain" description="ABC transporter" evidence="1">
    <location>
        <begin position="5"/>
        <end position="231"/>
    </location>
</feature>
<feature type="binding site" evidence="1">
    <location>
        <begin position="41"/>
        <end position="48"/>
    </location>
    <ligand>
        <name>ATP</name>
        <dbReference type="ChEBI" id="CHEBI:30616"/>
    </ligand>
</feature>
<comment type="function">
    <text evidence="1">Part of the ABC transporter complex LolCDE involved in the translocation of mature outer membrane-directed lipoproteins, from the inner membrane to the periplasmic chaperone, LolA. Responsible for the formation of the LolA-lipoprotein complex in an ATP-dependent manner.</text>
</comment>
<comment type="subunit">
    <text evidence="1">The complex is composed of two ATP-binding proteins (LolD) and two transmembrane proteins (LolC and LolE).</text>
</comment>
<comment type="subcellular location">
    <subcellularLocation>
        <location evidence="1">Cell inner membrane</location>
        <topology evidence="1">Peripheral membrane protein</topology>
    </subcellularLocation>
</comment>
<comment type="similarity">
    <text evidence="1">Belongs to the ABC transporter superfamily. Lipoprotein translocase (TC 3.A.1.125) family.</text>
</comment>
<protein>
    <recommendedName>
        <fullName evidence="1">Lipoprotein-releasing system ATP-binding protein LolD 1</fullName>
        <ecNumber evidence="1">7.6.2.-</ecNumber>
    </recommendedName>
</protein>
<reference key="1">
    <citation type="journal article" date="2001" name="Proc. Natl. Acad. Sci. U.S.A.">
        <title>Complete genome sequence of Caulobacter crescentus.</title>
        <authorList>
            <person name="Nierman W.C."/>
            <person name="Feldblyum T.V."/>
            <person name="Laub M.T."/>
            <person name="Paulsen I.T."/>
            <person name="Nelson K.E."/>
            <person name="Eisen J.A."/>
            <person name="Heidelberg J.F."/>
            <person name="Alley M.R.K."/>
            <person name="Ohta N."/>
            <person name="Maddock J.R."/>
            <person name="Potocka I."/>
            <person name="Nelson W.C."/>
            <person name="Newton A."/>
            <person name="Stephens C."/>
            <person name="Phadke N.D."/>
            <person name="Ely B."/>
            <person name="DeBoy R.T."/>
            <person name="Dodson R.J."/>
            <person name="Durkin A.S."/>
            <person name="Gwinn M.L."/>
            <person name="Haft D.H."/>
            <person name="Kolonay J.F."/>
            <person name="Smit J."/>
            <person name="Craven M.B."/>
            <person name="Khouri H.M."/>
            <person name="Shetty J."/>
            <person name="Berry K.J."/>
            <person name="Utterback T.R."/>
            <person name="Tran K."/>
            <person name="Wolf A.M."/>
            <person name="Vamathevan J.J."/>
            <person name="Ermolaeva M.D."/>
            <person name="White O."/>
            <person name="Salzberg S.L."/>
            <person name="Venter J.C."/>
            <person name="Shapiro L."/>
            <person name="Fraser C.M."/>
        </authorList>
    </citation>
    <scope>NUCLEOTIDE SEQUENCE [LARGE SCALE GENOMIC DNA]</scope>
    <source>
        <strain>ATCC 19089 / CIP 103742 / CB 15</strain>
    </source>
</reference>
<evidence type="ECO:0000255" key="1">
    <source>
        <dbReference type="HAMAP-Rule" id="MF_01708"/>
    </source>
</evidence>
<gene>
    <name evidence="1" type="primary">lolD1</name>
    <name type="ordered locus">CC_0932</name>
</gene>
<keyword id="KW-0067">ATP-binding</keyword>
<keyword id="KW-0997">Cell inner membrane</keyword>
<keyword id="KW-1003">Cell membrane</keyword>
<keyword id="KW-0472">Membrane</keyword>
<keyword id="KW-0547">Nucleotide-binding</keyword>
<keyword id="KW-1185">Reference proteome</keyword>
<keyword id="KW-1278">Translocase</keyword>
<keyword id="KW-0813">Transport</keyword>
<proteinExistence type="inferred from homology"/>